<comment type="function">
    <text evidence="1">Catalyzes the attachment of valine to tRNA(Val). As ValRS can inadvertently accommodate and process structurally similar amino acids such as threonine, to avoid such errors, it has a 'posttransfer' editing activity that hydrolyzes mischarged Thr-tRNA(Val) in a tRNA-dependent manner.</text>
</comment>
<comment type="catalytic activity">
    <reaction evidence="1">
        <text>tRNA(Val) + L-valine + ATP = L-valyl-tRNA(Val) + AMP + diphosphate</text>
        <dbReference type="Rhea" id="RHEA:10704"/>
        <dbReference type="Rhea" id="RHEA-COMP:9672"/>
        <dbReference type="Rhea" id="RHEA-COMP:9708"/>
        <dbReference type="ChEBI" id="CHEBI:30616"/>
        <dbReference type="ChEBI" id="CHEBI:33019"/>
        <dbReference type="ChEBI" id="CHEBI:57762"/>
        <dbReference type="ChEBI" id="CHEBI:78442"/>
        <dbReference type="ChEBI" id="CHEBI:78537"/>
        <dbReference type="ChEBI" id="CHEBI:456215"/>
        <dbReference type="EC" id="6.1.1.9"/>
    </reaction>
</comment>
<comment type="subunit">
    <text evidence="1">Monomer.</text>
</comment>
<comment type="subcellular location">
    <subcellularLocation>
        <location evidence="1">Cytoplasm</location>
    </subcellularLocation>
</comment>
<comment type="domain">
    <text evidence="1">ValRS has two distinct active sites: one for aminoacylation and one for editing. The misactivated threonine is translocated from the active site to the editing site.</text>
</comment>
<comment type="domain">
    <text evidence="1">The C-terminal coiled-coil domain is crucial for aminoacylation activity.</text>
</comment>
<comment type="similarity">
    <text evidence="1">Belongs to the class-I aminoacyl-tRNA synthetase family. ValS type 1 subfamily.</text>
</comment>
<gene>
    <name evidence="1" type="primary">valS</name>
    <name type="ordered locus">NFA_13480</name>
</gene>
<protein>
    <recommendedName>
        <fullName evidence="1">Valine--tRNA ligase</fullName>
        <ecNumber evidence="1">6.1.1.9</ecNumber>
    </recommendedName>
    <alternativeName>
        <fullName evidence="1">Valyl-tRNA synthetase</fullName>
        <shortName evidence="1">ValRS</shortName>
    </alternativeName>
</protein>
<name>SYV_NOCFA</name>
<sequence length="893" mass="98837">MTSTAPDNSRNRADALPKSWDPSAVEAEMYERWVSAGYFTADPASGKPAYSIVLPPPNVTGTLHMGHALDHTLMDTLARRKRMQGYEVLWLPGMDHAGIATQTVVEKQLAVDGKTKEDFGRELFVEKVWDWKRESGGAIQWQMRALGDGVDWSRDRFTMDEGLSRAVQTMFKRLYDAGLIYRAERLVNWSPELRTAISDIEVKHEDVEGELVSLRYGSLNDDEPHVVVATTRVETMLGDTAVAVHPDDPRYRDLIGTTLEHPITGRQIPIVADDYVDPEFGSGAVKITPAHDPNDFEIGLRHNLPMPTIMDERGRIANTGTEFDGMDRFEARVKVRERLAREGRVVAEKRPYIHSVGHSERTGEPIEPRLSMQWWVKVEALAKAAGDAVRNGQVVIHPASQEPRWFEWVDNMHDWTISRQLWWGHRIPIWYGPDGEVVCLGPGETPPEGWVQDPDVLDTWFSSGLWPFSTMGWPDATPELTKFYPTSVLVTGYDILFFWVARMMMFGMYVAEDPALTAGKDPGQVQVPFKDIFLHGLIRDQHGKKMSKSRGNGIDPLDWIRSYGADALRFTLARGAQPGGDLSVGEPHALASRSFVTKLFNATKFALLNGAAPGELPDRGSLTDADRWILDRLDEVLAEVDAAFDAYEFGKACEALYHFAWDELCDWYLELAKVQFAADGARAESTRTVLGTVLDAVLRLLHPVIPFVTESLWKALTGGESVVVAAWPTASGVTPDADAARRIADAQRLITEIRRFRSDQGLADKQKVSAKLIGVDSAELDALAPAIAALARLTEAGPDFAATASVEVRLSGATVTVELDTSGSVDLEAERKRLEKDLAAAQKELATTEGKLGNEAFLAKAPEQVVDKIRTRRDVAAAEVARIGARLAELGAR</sequence>
<reference key="1">
    <citation type="journal article" date="2004" name="Proc. Natl. Acad. Sci. U.S.A.">
        <title>The complete genomic sequence of Nocardia farcinica IFM 10152.</title>
        <authorList>
            <person name="Ishikawa J."/>
            <person name="Yamashita A."/>
            <person name="Mikami Y."/>
            <person name="Hoshino Y."/>
            <person name="Kurita H."/>
            <person name="Hotta K."/>
            <person name="Shiba T."/>
            <person name="Hattori M."/>
        </authorList>
    </citation>
    <scope>NUCLEOTIDE SEQUENCE [LARGE SCALE GENOMIC DNA]</scope>
    <source>
        <strain>IFM 10152</strain>
    </source>
</reference>
<proteinExistence type="inferred from homology"/>
<keyword id="KW-0030">Aminoacyl-tRNA synthetase</keyword>
<keyword id="KW-0067">ATP-binding</keyword>
<keyword id="KW-0175">Coiled coil</keyword>
<keyword id="KW-0963">Cytoplasm</keyword>
<keyword id="KW-0436">Ligase</keyword>
<keyword id="KW-0547">Nucleotide-binding</keyword>
<keyword id="KW-0648">Protein biosynthesis</keyword>
<keyword id="KW-1185">Reference proteome</keyword>
<dbReference type="EC" id="6.1.1.9" evidence="1"/>
<dbReference type="EMBL" id="AP006618">
    <property type="protein sequence ID" value="BAD56193.1"/>
    <property type="molecule type" value="Genomic_DNA"/>
</dbReference>
<dbReference type="RefSeq" id="WP_011207878.1">
    <property type="nucleotide sequence ID" value="NC_006361.1"/>
</dbReference>
<dbReference type="SMR" id="Q5Z048"/>
<dbReference type="STRING" id="247156.NFA_13480"/>
<dbReference type="GeneID" id="61132170"/>
<dbReference type="KEGG" id="nfa:NFA_13480"/>
<dbReference type="eggNOG" id="COG0525">
    <property type="taxonomic scope" value="Bacteria"/>
</dbReference>
<dbReference type="HOGENOM" id="CLU_001493_0_2_11"/>
<dbReference type="OrthoDB" id="9810365at2"/>
<dbReference type="Proteomes" id="UP000006820">
    <property type="component" value="Chromosome"/>
</dbReference>
<dbReference type="GO" id="GO:0005829">
    <property type="term" value="C:cytosol"/>
    <property type="evidence" value="ECO:0007669"/>
    <property type="project" value="TreeGrafter"/>
</dbReference>
<dbReference type="GO" id="GO:0002161">
    <property type="term" value="F:aminoacyl-tRNA deacylase activity"/>
    <property type="evidence" value="ECO:0007669"/>
    <property type="project" value="InterPro"/>
</dbReference>
<dbReference type="GO" id="GO:0005524">
    <property type="term" value="F:ATP binding"/>
    <property type="evidence" value="ECO:0007669"/>
    <property type="project" value="UniProtKB-UniRule"/>
</dbReference>
<dbReference type="GO" id="GO:0004832">
    <property type="term" value="F:valine-tRNA ligase activity"/>
    <property type="evidence" value="ECO:0007669"/>
    <property type="project" value="UniProtKB-UniRule"/>
</dbReference>
<dbReference type="GO" id="GO:0006438">
    <property type="term" value="P:valyl-tRNA aminoacylation"/>
    <property type="evidence" value="ECO:0007669"/>
    <property type="project" value="UniProtKB-UniRule"/>
</dbReference>
<dbReference type="CDD" id="cd07962">
    <property type="entry name" value="Anticodon_Ia_Val"/>
    <property type="match status" value="1"/>
</dbReference>
<dbReference type="CDD" id="cd00817">
    <property type="entry name" value="ValRS_core"/>
    <property type="match status" value="1"/>
</dbReference>
<dbReference type="FunFam" id="1.10.287.380:FF:000001">
    <property type="entry name" value="Valine--tRNA ligase"/>
    <property type="match status" value="1"/>
</dbReference>
<dbReference type="FunFam" id="1.10.730.10:FF:000027">
    <property type="entry name" value="Valine--tRNA ligase"/>
    <property type="match status" value="1"/>
</dbReference>
<dbReference type="FunFam" id="3.40.50.620:FF:000098">
    <property type="entry name" value="Valine--tRNA ligase"/>
    <property type="match status" value="1"/>
</dbReference>
<dbReference type="FunFam" id="3.40.50.620:FF:000129">
    <property type="entry name" value="Valine--tRNA ligase"/>
    <property type="match status" value="1"/>
</dbReference>
<dbReference type="FunFam" id="3.90.740.10:FF:000005">
    <property type="entry name" value="Valine--tRNA ligase, mitochondrial"/>
    <property type="match status" value="1"/>
</dbReference>
<dbReference type="Gene3D" id="3.40.50.620">
    <property type="entry name" value="HUPs"/>
    <property type="match status" value="2"/>
</dbReference>
<dbReference type="Gene3D" id="1.10.730.10">
    <property type="entry name" value="Isoleucyl-tRNA Synthetase, Domain 1"/>
    <property type="match status" value="1"/>
</dbReference>
<dbReference type="Gene3D" id="1.10.287.380">
    <property type="entry name" value="Valyl-tRNA synthetase, C-terminal domain"/>
    <property type="match status" value="1"/>
</dbReference>
<dbReference type="Gene3D" id="3.90.740.10">
    <property type="entry name" value="Valyl/Leucyl/Isoleucyl-tRNA synthetase, editing domain"/>
    <property type="match status" value="1"/>
</dbReference>
<dbReference type="HAMAP" id="MF_02004">
    <property type="entry name" value="Val_tRNA_synth_type1"/>
    <property type="match status" value="1"/>
</dbReference>
<dbReference type="InterPro" id="IPR001412">
    <property type="entry name" value="aa-tRNA-synth_I_CS"/>
</dbReference>
<dbReference type="InterPro" id="IPR002300">
    <property type="entry name" value="aa-tRNA-synth_Ia"/>
</dbReference>
<dbReference type="InterPro" id="IPR033705">
    <property type="entry name" value="Anticodon_Ia_Val"/>
</dbReference>
<dbReference type="InterPro" id="IPR013155">
    <property type="entry name" value="M/V/L/I-tRNA-synth_anticd-bd"/>
</dbReference>
<dbReference type="InterPro" id="IPR014729">
    <property type="entry name" value="Rossmann-like_a/b/a_fold"/>
</dbReference>
<dbReference type="InterPro" id="IPR010978">
    <property type="entry name" value="tRNA-bd_arm"/>
</dbReference>
<dbReference type="InterPro" id="IPR009080">
    <property type="entry name" value="tRNAsynth_Ia_anticodon-bd"/>
</dbReference>
<dbReference type="InterPro" id="IPR037118">
    <property type="entry name" value="Val-tRNA_synth_C_sf"/>
</dbReference>
<dbReference type="InterPro" id="IPR019499">
    <property type="entry name" value="Val-tRNA_synth_tRNA-bd"/>
</dbReference>
<dbReference type="InterPro" id="IPR009008">
    <property type="entry name" value="Val/Leu/Ile-tRNA-synth_edit"/>
</dbReference>
<dbReference type="InterPro" id="IPR002303">
    <property type="entry name" value="Valyl-tRNA_ligase"/>
</dbReference>
<dbReference type="NCBIfam" id="NF004349">
    <property type="entry name" value="PRK05729.1"/>
    <property type="match status" value="1"/>
</dbReference>
<dbReference type="NCBIfam" id="TIGR00422">
    <property type="entry name" value="valS"/>
    <property type="match status" value="1"/>
</dbReference>
<dbReference type="PANTHER" id="PTHR11946:SF93">
    <property type="entry name" value="VALINE--TRNA LIGASE, CHLOROPLASTIC_MITOCHONDRIAL 2"/>
    <property type="match status" value="1"/>
</dbReference>
<dbReference type="PANTHER" id="PTHR11946">
    <property type="entry name" value="VALYL-TRNA SYNTHETASES"/>
    <property type="match status" value="1"/>
</dbReference>
<dbReference type="Pfam" id="PF08264">
    <property type="entry name" value="Anticodon_1"/>
    <property type="match status" value="1"/>
</dbReference>
<dbReference type="Pfam" id="PF00133">
    <property type="entry name" value="tRNA-synt_1"/>
    <property type="match status" value="2"/>
</dbReference>
<dbReference type="Pfam" id="PF10458">
    <property type="entry name" value="Val_tRNA-synt_C"/>
    <property type="match status" value="1"/>
</dbReference>
<dbReference type="PRINTS" id="PR00986">
    <property type="entry name" value="TRNASYNTHVAL"/>
</dbReference>
<dbReference type="SUPFAM" id="SSF47323">
    <property type="entry name" value="Anticodon-binding domain of a subclass of class I aminoacyl-tRNA synthetases"/>
    <property type="match status" value="1"/>
</dbReference>
<dbReference type="SUPFAM" id="SSF52374">
    <property type="entry name" value="Nucleotidylyl transferase"/>
    <property type="match status" value="1"/>
</dbReference>
<dbReference type="SUPFAM" id="SSF46589">
    <property type="entry name" value="tRNA-binding arm"/>
    <property type="match status" value="1"/>
</dbReference>
<dbReference type="SUPFAM" id="SSF50677">
    <property type="entry name" value="ValRS/IleRS/LeuRS editing domain"/>
    <property type="match status" value="1"/>
</dbReference>
<dbReference type="PROSITE" id="PS00178">
    <property type="entry name" value="AA_TRNA_LIGASE_I"/>
    <property type="match status" value="1"/>
</dbReference>
<organism>
    <name type="scientific">Nocardia farcinica (strain IFM 10152)</name>
    <dbReference type="NCBI Taxonomy" id="247156"/>
    <lineage>
        <taxon>Bacteria</taxon>
        <taxon>Bacillati</taxon>
        <taxon>Actinomycetota</taxon>
        <taxon>Actinomycetes</taxon>
        <taxon>Mycobacteriales</taxon>
        <taxon>Nocardiaceae</taxon>
        <taxon>Nocardia</taxon>
    </lineage>
</organism>
<accession>Q5Z048</accession>
<feature type="chain" id="PRO_0000224520" description="Valine--tRNA ligase">
    <location>
        <begin position="1"/>
        <end position="893"/>
    </location>
</feature>
<feature type="coiled-coil region" evidence="1">
    <location>
        <begin position="821"/>
        <end position="855"/>
    </location>
</feature>
<feature type="short sequence motif" description="'HIGH' region">
    <location>
        <begin position="57"/>
        <end position="67"/>
    </location>
</feature>
<feature type="short sequence motif" description="'KMSKS' region">
    <location>
        <begin position="545"/>
        <end position="549"/>
    </location>
</feature>
<feature type="binding site" evidence="1">
    <location>
        <position position="548"/>
    </location>
    <ligand>
        <name>ATP</name>
        <dbReference type="ChEBI" id="CHEBI:30616"/>
    </ligand>
</feature>
<evidence type="ECO:0000255" key="1">
    <source>
        <dbReference type="HAMAP-Rule" id="MF_02004"/>
    </source>
</evidence>